<protein>
    <recommendedName>
        <fullName evidence="1">UDP-N-acetylglucosamine 1-carboxyvinyltransferase 2</fullName>
        <ecNumber evidence="1">2.5.1.7</ecNumber>
    </recommendedName>
    <alternativeName>
        <fullName evidence="1">Enoylpyruvate transferase 2</fullName>
    </alternativeName>
    <alternativeName>
        <fullName evidence="1">UDP-N-acetylglucosamine enolpyruvyl transferase 2</fullName>
        <shortName evidence="1">EPT 2</shortName>
    </alternativeName>
</protein>
<feature type="chain" id="PRO_0000178886" description="UDP-N-acetylglucosamine 1-carboxyvinyltransferase 2">
    <location>
        <begin position="1"/>
        <end position="423"/>
    </location>
</feature>
<feature type="active site" description="Proton donor" evidence="1">
    <location>
        <position position="117"/>
    </location>
</feature>
<feature type="binding site" evidence="1">
    <location>
        <begin position="23"/>
        <end position="24"/>
    </location>
    <ligand>
        <name>phosphoenolpyruvate</name>
        <dbReference type="ChEBI" id="CHEBI:58702"/>
    </ligand>
</feature>
<feature type="binding site" evidence="1">
    <location>
        <position position="93"/>
    </location>
    <ligand>
        <name>UDP-N-acetyl-alpha-D-glucosamine</name>
        <dbReference type="ChEBI" id="CHEBI:57705"/>
    </ligand>
</feature>
<feature type="binding site" evidence="1">
    <location>
        <begin position="122"/>
        <end position="126"/>
    </location>
    <ligand>
        <name>UDP-N-acetyl-alpha-D-glucosamine</name>
        <dbReference type="ChEBI" id="CHEBI:57705"/>
    </ligand>
</feature>
<feature type="binding site" evidence="1">
    <location>
        <position position="305"/>
    </location>
    <ligand>
        <name>UDP-N-acetyl-alpha-D-glucosamine</name>
        <dbReference type="ChEBI" id="CHEBI:57705"/>
    </ligand>
</feature>
<feature type="binding site" evidence="1">
    <location>
        <position position="327"/>
    </location>
    <ligand>
        <name>UDP-N-acetyl-alpha-D-glucosamine</name>
        <dbReference type="ChEBI" id="CHEBI:57705"/>
    </ligand>
</feature>
<feature type="modified residue" description="2-(S-cysteinyl)pyruvic acid O-phosphothioketal" evidence="1">
    <location>
        <position position="117"/>
    </location>
</feature>
<keyword id="KW-0131">Cell cycle</keyword>
<keyword id="KW-0132">Cell division</keyword>
<keyword id="KW-0133">Cell shape</keyword>
<keyword id="KW-0961">Cell wall biogenesis/degradation</keyword>
<keyword id="KW-0963">Cytoplasm</keyword>
<keyword id="KW-0573">Peptidoglycan synthesis</keyword>
<keyword id="KW-0670">Pyruvate</keyword>
<keyword id="KW-0808">Transferase</keyword>
<proteinExistence type="inferred from homology"/>
<sequence>MTDKLIIRGGKKLAGTLQVDGAKNSAVALIPAAILAESEVVLEGLPDISDVHTLYNILEELGGTVRYDNKTAVIDPTDMISMPLPSGNVKKLRASYYLMGAMLGRFKKAVIGLPGGCYLGPRPIDQHIKGFEALGAKVTNEQGAIYLRADELKGARIYLDVVSVGATINIMLAAVRAKGKTVIENAAKEPEIIDVATLLTNMGAIIKGAGTDTIRITGVEHLHGCHHTIIPDRIEAGTFMVLAAASGKGVRIENVIPTHLEGIIAKLTEMGVPMDIEEDAIFVGEVEKIKKVDIKTYAYPGFPTDLQQPLTALLTRAEGSSVITDTIYPSRFKHIAEIERMGGKFKLEGRSAVINGPVQLQGSKVTATDLRAGAALVIAALLADGETEIHGVEHIERGYSKIIEKLSAIGANITRSSAAETKL</sequence>
<organism>
    <name type="scientific">Listeria monocytogenes serotype 4b (strain F2365)</name>
    <dbReference type="NCBI Taxonomy" id="265669"/>
    <lineage>
        <taxon>Bacteria</taxon>
        <taxon>Bacillati</taxon>
        <taxon>Bacillota</taxon>
        <taxon>Bacilli</taxon>
        <taxon>Bacillales</taxon>
        <taxon>Listeriaceae</taxon>
        <taxon>Listeria</taxon>
    </lineage>
</organism>
<name>MURA2_LISMF</name>
<reference key="1">
    <citation type="journal article" date="2004" name="Nucleic Acids Res.">
        <title>Whole genome comparisons of serotype 4b and 1/2a strains of the food-borne pathogen Listeria monocytogenes reveal new insights into the core genome components of this species.</title>
        <authorList>
            <person name="Nelson K.E."/>
            <person name="Fouts D.E."/>
            <person name="Mongodin E.F."/>
            <person name="Ravel J."/>
            <person name="DeBoy R.T."/>
            <person name="Kolonay J.F."/>
            <person name="Rasko D.A."/>
            <person name="Angiuoli S.V."/>
            <person name="Gill S.R."/>
            <person name="Paulsen I.T."/>
            <person name="Peterson J.D."/>
            <person name="White O."/>
            <person name="Nelson W.C."/>
            <person name="Nierman W.C."/>
            <person name="Beanan M.J."/>
            <person name="Brinkac L.M."/>
            <person name="Daugherty S.C."/>
            <person name="Dodson R.J."/>
            <person name="Durkin A.S."/>
            <person name="Madupu R."/>
            <person name="Haft D.H."/>
            <person name="Selengut J."/>
            <person name="Van Aken S.E."/>
            <person name="Khouri H.M."/>
            <person name="Fedorova N."/>
            <person name="Forberger H.A."/>
            <person name="Tran B."/>
            <person name="Kathariou S."/>
            <person name="Wonderling L.D."/>
            <person name="Uhlich G.A."/>
            <person name="Bayles D.O."/>
            <person name="Luchansky J.B."/>
            <person name="Fraser C.M."/>
        </authorList>
    </citation>
    <scope>NUCLEOTIDE SEQUENCE [LARGE SCALE GENOMIC DNA]</scope>
    <source>
        <strain>F2365</strain>
    </source>
</reference>
<evidence type="ECO:0000255" key="1">
    <source>
        <dbReference type="HAMAP-Rule" id="MF_00111"/>
    </source>
</evidence>
<comment type="function">
    <text evidence="1">Cell wall formation. Adds enolpyruvyl to UDP-N-acetylglucosamine.</text>
</comment>
<comment type="catalytic activity">
    <reaction evidence="1">
        <text>phosphoenolpyruvate + UDP-N-acetyl-alpha-D-glucosamine = UDP-N-acetyl-3-O-(1-carboxyvinyl)-alpha-D-glucosamine + phosphate</text>
        <dbReference type="Rhea" id="RHEA:18681"/>
        <dbReference type="ChEBI" id="CHEBI:43474"/>
        <dbReference type="ChEBI" id="CHEBI:57705"/>
        <dbReference type="ChEBI" id="CHEBI:58702"/>
        <dbReference type="ChEBI" id="CHEBI:68483"/>
        <dbReference type="EC" id="2.5.1.7"/>
    </reaction>
</comment>
<comment type="pathway">
    <text evidence="1">Cell wall biogenesis; peptidoglycan biosynthesis.</text>
</comment>
<comment type="subcellular location">
    <subcellularLocation>
        <location evidence="1">Cytoplasm</location>
    </subcellularLocation>
</comment>
<comment type="similarity">
    <text evidence="1">Belongs to the EPSP synthase family. MurA subfamily.</text>
</comment>
<gene>
    <name evidence="1" type="primary">murA2</name>
    <name type="synonym">murA-2</name>
    <name type="synonym">murZ</name>
    <name type="ordered locus">LMOf2365_2524</name>
</gene>
<accession>Q71WM7</accession>
<dbReference type="EC" id="2.5.1.7" evidence="1"/>
<dbReference type="EMBL" id="AE017262">
    <property type="protein sequence ID" value="AAT05289.1"/>
    <property type="molecule type" value="Genomic_DNA"/>
</dbReference>
<dbReference type="RefSeq" id="WP_003734483.1">
    <property type="nucleotide sequence ID" value="NC_002973.6"/>
</dbReference>
<dbReference type="SMR" id="Q71WM7"/>
<dbReference type="KEGG" id="lmf:LMOf2365_2524"/>
<dbReference type="HOGENOM" id="CLU_027387_0_0_9"/>
<dbReference type="UniPathway" id="UPA00219"/>
<dbReference type="GO" id="GO:0005737">
    <property type="term" value="C:cytoplasm"/>
    <property type="evidence" value="ECO:0007669"/>
    <property type="project" value="UniProtKB-SubCell"/>
</dbReference>
<dbReference type="GO" id="GO:0008760">
    <property type="term" value="F:UDP-N-acetylglucosamine 1-carboxyvinyltransferase activity"/>
    <property type="evidence" value="ECO:0007669"/>
    <property type="project" value="UniProtKB-UniRule"/>
</dbReference>
<dbReference type="GO" id="GO:0051301">
    <property type="term" value="P:cell division"/>
    <property type="evidence" value="ECO:0007669"/>
    <property type="project" value="UniProtKB-KW"/>
</dbReference>
<dbReference type="GO" id="GO:0071555">
    <property type="term" value="P:cell wall organization"/>
    <property type="evidence" value="ECO:0007669"/>
    <property type="project" value="UniProtKB-KW"/>
</dbReference>
<dbReference type="GO" id="GO:0009252">
    <property type="term" value="P:peptidoglycan biosynthetic process"/>
    <property type="evidence" value="ECO:0007669"/>
    <property type="project" value="UniProtKB-UniRule"/>
</dbReference>
<dbReference type="GO" id="GO:0008360">
    <property type="term" value="P:regulation of cell shape"/>
    <property type="evidence" value="ECO:0007669"/>
    <property type="project" value="UniProtKB-KW"/>
</dbReference>
<dbReference type="GO" id="GO:0019277">
    <property type="term" value="P:UDP-N-acetylgalactosamine biosynthetic process"/>
    <property type="evidence" value="ECO:0007669"/>
    <property type="project" value="InterPro"/>
</dbReference>
<dbReference type="CDD" id="cd01555">
    <property type="entry name" value="UdpNAET"/>
    <property type="match status" value="1"/>
</dbReference>
<dbReference type="FunFam" id="3.65.10.10:FF:000001">
    <property type="entry name" value="UDP-N-acetylglucosamine 1-carboxyvinyltransferase"/>
    <property type="match status" value="1"/>
</dbReference>
<dbReference type="Gene3D" id="3.65.10.10">
    <property type="entry name" value="Enolpyruvate transferase domain"/>
    <property type="match status" value="2"/>
</dbReference>
<dbReference type="HAMAP" id="MF_00111">
    <property type="entry name" value="MurA"/>
    <property type="match status" value="1"/>
</dbReference>
<dbReference type="InterPro" id="IPR001986">
    <property type="entry name" value="Enolpyruvate_Tfrase_dom"/>
</dbReference>
<dbReference type="InterPro" id="IPR036968">
    <property type="entry name" value="Enolpyruvate_Tfrase_sf"/>
</dbReference>
<dbReference type="InterPro" id="IPR050068">
    <property type="entry name" value="MurA_subfamily"/>
</dbReference>
<dbReference type="InterPro" id="IPR013792">
    <property type="entry name" value="RNA3'P_cycl/enolpyr_Trfase_a/b"/>
</dbReference>
<dbReference type="InterPro" id="IPR005750">
    <property type="entry name" value="UDP_GlcNAc_COvinyl_MurA"/>
</dbReference>
<dbReference type="NCBIfam" id="TIGR01072">
    <property type="entry name" value="murA"/>
    <property type="match status" value="1"/>
</dbReference>
<dbReference type="NCBIfam" id="NF006873">
    <property type="entry name" value="PRK09369.1"/>
    <property type="match status" value="1"/>
</dbReference>
<dbReference type="NCBIfam" id="NF009470">
    <property type="entry name" value="PRK12830.1"/>
    <property type="match status" value="1"/>
</dbReference>
<dbReference type="PANTHER" id="PTHR43783">
    <property type="entry name" value="UDP-N-ACETYLGLUCOSAMINE 1-CARBOXYVINYLTRANSFERASE"/>
    <property type="match status" value="1"/>
</dbReference>
<dbReference type="PANTHER" id="PTHR43783:SF2">
    <property type="entry name" value="UDP-N-ACETYLGLUCOSAMINE 1-CARBOXYVINYLTRANSFERASE 2"/>
    <property type="match status" value="1"/>
</dbReference>
<dbReference type="Pfam" id="PF00275">
    <property type="entry name" value="EPSP_synthase"/>
    <property type="match status" value="1"/>
</dbReference>
<dbReference type="SUPFAM" id="SSF55205">
    <property type="entry name" value="EPT/RTPC-like"/>
    <property type="match status" value="1"/>
</dbReference>